<reference key="1">
    <citation type="journal article" date="2009" name="Proc. Natl. Acad. Sci. U.S.A.">
        <title>Characterizing a model human gut microbiota composed of members of its two dominant bacterial phyla.</title>
        <authorList>
            <person name="Mahowald M.A."/>
            <person name="Rey F.E."/>
            <person name="Seedorf H."/>
            <person name="Turnbaugh P.J."/>
            <person name="Fulton R.S."/>
            <person name="Wollam A."/>
            <person name="Shah N."/>
            <person name="Wang C."/>
            <person name="Magrini V."/>
            <person name="Wilson R.K."/>
            <person name="Cantarel B.L."/>
            <person name="Coutinho P.M."/>
            <person name="Henrissat B."/>
            <person name="Crock L.W."/>
            <person name="Russell A."/>
            <person name="Verberkmoes N.C."/>
            <person name="Hettich R.L."/>
            <person name="Gordon J.I."/>
        </authorList>
    </citation>
    <scope>NUCLEOTIDE SEQUENCE [LARGE SCALE GENOMIC DNA]</scope>
    <source>
        <strain>ATCC 33656 / DSM 3377 / JCM 17463 / KCTC 5835 / LMG 30912 / VPI 0990</strain>
    </source>
</reference>
<keyword id="KW-0687">Ribonucleoprotein</keyword>
<keyword id="KW-0689">Ribosomal protein</keyword>
<comment type="similarity">
    <text evidence="1">Belongs to the bacterial ribosomal protein bS21 family.</text>
</comment>
<sequence>MSSVIVKENETLDSALRRFKRNCAKAGIQQEIRKREHYEKPSVKRKKKSEAARKRKYN</sequence>
<evidence type="ECO:0000255" key="1">
    <source>
        <dbReference type="HAMAP-Rule" id="MF_00358"/>
    </source>
</evidence>
<evidence type="ECO:0000256" key="2">
    <source>
        <dbReference type="SAM" id="MobiDB-lite"/>
    </source>
</evidence>
<evidence type="ECO:0000305" key="3"/>
<name>RS21_AGARV</name>
<gene>
    <name evidence="1" type="primary">rpsU</name>
    <name type="ordered locus">EUBREC_1833</name>
</gene>
<feature type="chain" id="PRO_1000205368" description="Small ribosomal subunit protein bS21">
    <location>
        <begin position="1"/>
        <end position="58"/>
    </location>
</feature>
<feature type="region of interest" description="Disordered" evidence="2">
    <location>
        <begin position="31"/>
        <end position="58"/>
    </location>
</feature>
<feature type="compositionally biased region" description="Basic and acidic residues" evidence="2">
    <location>
        <begin position="31"/>
        <end position="42"/>
    </location>
</feature>
<feature type="compositionally biased region" description="Basic residues" evidence="2">
    <location>
        <begin position="43"/>
        <end position="58"/>
    </location>
</feature>
<accession>C4ZAS2</accession>
<protein>
    <recommendedName>
        <fullName evidence="1">Small ribosomal subunit protein bS21</fullName>
    </recommendedName>
    <alternativeName>
        <fullName evidence="3">30S ribosomal protein S21</fullName>
    </alternativeName>
</protein>
<dbReference type="EMBL" id="CP001107">
    <property type="protein sequence ID" value="ACR75577.1"/>
    <property type="molecule type" value="Genomic_DNA"/>
</dbReference>
<dbReference type="RefSeq" id="WP_006856185.1">
    <property type="nucleotide sequence ID" value="NZ_CAXSYD010000002.1"/>
</dbReference>
<dbReference type="SMR" id="C4ZAS2"/>
<dbReference type="STRING" id="515619.EUBREC_1833"/>
<dbReference type="PaxDb" id="515619-EUBREC_1833"/>
<dbReference type="GeneID" id="93723158"/>
<dbReference type="KEGG" id="ere:EUBREC_1833"/>
<dbReference type="HOGENOM" id="CLU_159258_3_2_9"/>
<dbReference type="Proteomes" id="UP000001477">
    <property type="component" value="Chromosome"/>
</dbReference>
<dbReference type="GO" id="GO:1990904">
    <property type="term" value="C:ribonucleoprotein complex"/>
    <property type="evidence" value="ECO:0007669"/>
    <property type="project" value="UniProtKB-KW"/>
</dbReference>
<dbReference type="GO" id="GO:0005840">
    <property type="term" value="C:ribosome"/>
    <property type="evidence" value="ECO:0007669"/>
    <property type="project" value="UniProtKB-KW"/>
</dbReference>
<dbReference type="GO" id="GO:0003735">
    <property type="term" value="F:structural constituent of ribosome"/>
    <property type="evidence" value="ECO:0007669"/>
    <property type="project" value="InterPro"/>
</dbReference>
<dbReference type="GO" id="GO:0006412">
    <property type="term" value="P:translation"/>
    <property type="evidence" value="ECO:0007669"/>
    <property type="project" value="UniProtKB-UniRule"/>
</dbReference>
<dbReference type="Gene3D" id="1.20.5.1150">
    <property type="entry name" value="Ribosomal protein S8"/>
    <property type="match status" value="1"/>
</dbReference>
<dbReference type="HAMAP" id="MF_00358">
    <property type="entry name" value="Ribosomal_bS21"/>
    <property type="match status" value="1"/>
</dbReference>
<dbReference type="InterPro" id="IPR001911">
    <property type="entry name" value="Ribosomal_bS21"/>
</dbReference>
<dbReference type="InterPro" id="IPR018278">
    <property type="entry name" value="Ribosomal_bS21_CS"/>
</dbReference>
<dbReference type="InterPro" id="IPR038380">
    <property type="entry name" value="Ribosomal_bS21_sf"/>
</dbReference>
<dbReference type="NCBIfam" id="TIGR00030">
    <property type="entry name" value="S21p"/>
    <property type="match status" value="1"/>
</dbReference>
<dbReference type="PANTHER" id="PTHR21109">
    <property type="entry name" value="MITOCHONDRIAL 28S RIBOSOMAL PROTEIN S21"/>
    <property type="match status" value="1"/>
</dbReference>
<dbReference type="PANTHER" id="PTHR21109:SF22">
    <property type="entry name" value="SMALL RIBOSOMAL SUBUNIT PROTEIN BS21"/>
    <property type="match status" value="1"/>
</dbReference>
<dbReference type="Pfam" id="PF01165">
    <property type="entry name" value="Ribosomal_S21"/>
    <property type="match status" value="1"/>
</dbReference>
<dbReference type="PRINTS" id="PR00976">
    <property type="entry name" value="RIBOSOMALS21"/>
</dbReference>
<dbReference type="PROSITE" id="PS01181">
    <property type="entry name" value="RIBOSOMAL_S21"/>
    <property type="match status" value="1"/>
</dbReference>
<proteinExistence type="inferred from homology"/>
<organism>
    <name type="scientific">Agathobacter rectalis (strain ATCC 33656 / DSM 3377 / JCM 17463 / KCTC 5835 / VPI 0990)</name>
    <name type="common">Eubacterium rectale</name>
    <dbReference type="NCBI Taxonomy" id="515619"/>
    <lineage>
        <taxon>Bacteria</taxon>
        <taxon>Bacillati</taxon>
        <taxon>Bacillota</taxon>
        <taxon>Clostridia</taxon>
        <taxon>Lachnospirales</taxon>
        <taxon>Lachnospiraceae</taxon>
        <taxon>Agathobacter</taxon>
    </lineage>
</organism>